<gene>
    <name type="primary">ND5</name>
    <name type="synonym">NAD5</name>
</gene>
<protein>
    <recommendedName>
        <fullName>NADH-ubiquinone oxidoreductase chain 5</fullName>
        <ecNumber>7.1.1.2</ecNumber>
    </recommendedName>
    <alternativeName>
        <fullName>NADH dehydrogenase subunit 5</fullName>
    </alternativeName>
</protein>
<accession>P50366</accession>
<name>NU5M_PHYIN</name>
<sequence length="664" mass="76150">MLLLTLIFLPFLGSVAAGLFGFYIGRKGSVFITTLTTFLSCIFSLIIIYNSITNEYEYIIYISNWINSGLFNCNWCFLFDSLTMIMLVVVTSISTLVHLYSSQYMAHDPHLSRFMSYLSLFTFFMIILVTGDNFMQMFVGWEGVGFCSYLLINFWFTRLQANKAAIKAMLVNRISDLILLLGVLTIFYNIRTIEYFSTFAAISIVKDFKFIFFNYILSIIDVACILIFIGAMGKSAQIFLHLWLPDAMEGPTPVSALIHAATMVTAGVYLTARCSPMFEYSMFSLKIITIIGASTAFFASTVGLVQNDFKKIVAYSTCSQLGYMFFACGLSNYPLAIFHLSNHAYFKALLFLCSGAVIHAMGDEQDIRKMGGLRRILPFTYIMFLIGSLSLMGFPFLTGFYSKDLILEVAFASFSETGHFAYWLGTIGAFFTAFYSTRLLFFAFLSETNAYKNIIKNAHDVPLEMGIPLGLLAFGSIFIGYISKDMFVGLGSDFWNNSIYINPFNNQMIDAEFLPTFFKLLPVILSFCGLFGAFYLYFFKFKFLYNLKISEYGLYFYNFLNRKWYFDKIYYEFINQYILKIGYNVTYKMIDKGLIEMCGPYGLTTIFSFLSQQIILLQTGYIYHYSLLMLISTIFLINIIFFSIIYYFNIITILLFLFIFLLIK</sequence>
<reference key="1">
    <citation type="book" date="1992" name="Genetic maps">
        <title>The mitochondrial genome of Phytophthora infestans.</title>
        <editorList>
            <person name="O'Brien S.J."/>
        </editorList>
        <authorList>
            <person name="Lang B.F."/>
            <person name="Forget L."/>
        </authorList>
    </citation>
    <scope>NUCLEOTIDE SEQUENCE [GENOMIC DNA]</scope>
    <source>
        <strain>ATCC 16981 / West Virginia 4</strain>
    </source>
</reference>
<reference key="2">
    <citation type="journal article" date="1995" name="Can. J. Bot.">
        <title>A robust fungal phylogeny using the mitochondrially encoded nad5 protein sequence.</title>
        <authorList>
            <person name="Paquin B."/>
            <person name="Roewer I."/>
            <person name="Wang Z."/>
            <person name="Lang B.F."/>
        </authorList>
    </citation>
    <scope>NUCLEOTIDE SEQUENCE [GENOMIC DNA]</scope>
    <source>
        <strain>ATCC 16981 / West Virginia 4</strain>
    </source>
</reference>
<organism>
    <name type="scientific">Phytophthora infestans</name>
    <name type="common">Potato late blight agent</name>
    <name type="synonym">Botrytis infestans</name>
    <dbReference type="NCBI Taxonomy" id="4787"/>
    <lineage>
        <taxon>Eukaryota</taxon>
        <taxon>Sar</taxon>
        <taxon>Stramenopiles</taxon>
        <taxon>Oomycota</taxon>
        <taxon>Peronosporales</taxon>
        <taxon>Peronosporaceae</taxon>
        <taxon>Phytophthora</taxon>
    </lineage>
</organism>
<geneLocation type="mitochondrion"/>
<keyword id="KW-0249">Electron transport</keyword>
<keyword id="KW-0472">Membrane</keyword>
<keyword id="KW-0496">Mitochondrion</keyword>
<keyword id="KW-0999">Mitochondrion inner membrane</keyword>
<keyword id="KW-0520">NAD</keyword>
<keyword id="KW-0679">Respiratory chain</keyword>
<keyword id="KW-1278">Translocase</keyword>
<keyword id="KW-0812">Transmembrane</keyword>
<keyword id="KW-1133">Transmembrane helix</keyword>
<keyword id="KW-0813">Transport</keyword>
<keyword id="KW-0830">Ubiquinone</keyword>
<comment type="function">
    <text evidence="1">Core subunit of the mitochondrial membrane respiratory chain NADH dehydrogenase (Complex I) that is believed to belong to the minimal assembly required for catalysis. Complex I functions in the transfer of electrons from NADH to the respiratory chain. The immediate electron acceptor for the enzyme is believed to be ubiquinone (By similarity).</text>
</comment>
<comment type="catalytic activity">
    <reaction>
        <text>a ubiquinone + NADH + 5 H(+)(in) = a ubiquinol + NAD(+) + 4 H(+)(out)</text>
        <dbReference type="Rhea" id="RHEA:29091"/>
        <dbReference type="Rhea" id="RHEA-COMP:9565"/>
        <dbReference type="Rhea" id="RHEA-COMP:9566"/>
        <dbReference type="ChEBI" id="CHEBI:15378"/>
        <dbReference type="ChEBI" id="CHEBI:16389"/>
        <dbReference type="ChEBI" id="CHEBI:17976"/>
        <dbReference type="ChEBI" id="CHEBI:57540"/>
        <dbReference type="ChEBI" id="CHEBI:57945"/>
        <dbReference type="EC" id="7.1.1.2"/>
    </reaction>
</comment>
<comment type="subcellular location">
    <subcellularLocation>
        <location evidence="1">Mitochondrion inner membrane</location>
        <topology evidence="1">Multi-pass membrane protein</topology>
    </subcellularLocation>
</comment>
<comment type="similarity">
    <text evidence="3">Belongs to the complex I subunit 5 family.</text>
</comment>
<evidence type="ECO:0000250" key="1"/>
<evidence type="ECO:0000255" key="2"/>
<evidence type="ECO:0000305" key="3"/>
<dbReference type="EC" id="7.1.1.2"/>
<dbReference type="EMBL" id="U17009">
    <property type="protein sequence ID" value="AAA99061.1"/>
    <property type="molecule type" value="Genomic_DNA"/>
</dbReference>
<dbReference type="PIR" id="T14132">
    <property type="entry name" value="T14132"/>
</dbReference>
<dbReference type="RefSeq" id="NP_037615.1">
    <property type="nucleotide sequence ID" value="NC_002387.1"/>
</dbReference>
<dbReference type="SMR" id="P50366"/>
<dbReference type="GeneID" id="808860"/>
<dbReference type="GO" id="GO:0005743">
    <property type="term" value="C:mitochondrial inner membrane"/>
    <property type="evidence" value="ECO:0007669"/>
    <property type="project" value="UniProtKB-SubCell"/>
</dbReference>
<dbReference type="GO" id="GO:0008137">
    <property type="term" value="F:NADH dehydrogenase (ubiquinone) activity"/>
    <property type="evidence" value="ECO:0007669"/>
    <property type="project" value="UniProtKB-EC"/>
</dbReference>
<dbReference type="GO" id="GO:0042773">
    <property type="term" value="P:ATP synthesis coupled electron transport"/>
    <property type="evidence" value="ECO:0007669"/>
    <property type="project" value="InterPro"/>
</dbReference>
<dbReference type="GO" id="GO:0015990">
    <property type="term" value="P:electron transport coupled proton transport"/>
    <property type="evidence" value="ECO:0007669"/>
    <property type="project" value="TreeGrafter"/>
</dbReference>
<dbReference type="Gene3D" id="1.20.5.2700">
    <property type="match status" value="1"/>
</dbReference>
<dbReference type="InterPro" id="IPR010934">
    <property type="entry name" value="NADH_DH_su5_C"/>
</dbReference>
<dbReference type="InterPro" id="IPR018393">
    <property type="entry name" value="NADHpl_OxRdtase_5_subgr"/>
</dbReference>
<dbReference type="InterPro" id="IPR001750">
    <property type="entry name" value="ND/Mrp_TM"/>
</dbReference>
<dbReference type="InterPro" id="IPR003945">
    <property type="entry name" value="NU5C-like"/>
</dbReference>
<dbReference type="InterPro" id="IPR001516">
    <property type="entry name" value="Proton_antipo_N"/>
</dbReference>
<dbReference type="NCBIfam" id="TIGR01974">
    <property type="entry name" value="NDH_I_L"/>
    <property type="match status" value="1"/>
</dbReference>
<dbReference type="NCBIfam" id="NF005141">
    <property type="entry name" value="PRK06590.1"/>
    <property type="match status" value="1"/>
</dbReference>
<dbReference type="PANTHER" id="PTHR42829">
    <property type="entry name" value="NADH-UBIQUINONE OXIDOREDUCTASE CHAIN 5"/>
    <property type="match status" value="1"/>
</dbReference>
<dbReference type="PANTHER" id="PTHR42829:SF2">
    <property type="entry name" value="NADH-UBIQUINONE OXIDOREDUCTASE CHAIN 5"/>
    <property type="match status" value="1"/>
</dbReference>
<dbReference type="Pfam" id="PF06455">
    <property type="entry name" value="NADH5_C"/>
    <property type="match status" value="1"/>
</dbReference>
<dbReference type="Pfam" id="PF00361">
    <property type="entry name" value="Proton_antipo_M"/>
    <property type="match status" value="1"/>
</dbReference>
<dbReference type="Pfam" id="PF00662">
    <property type="entry name" value="Proton_antipo_N"/>
    <property type="match status" value="1"/>
</dbReference>
<dbReference type="PRINTS" id="PR01434">
    <property type="entry name" value="NADHDHGNASE5"/>
</dbReference>
<dbReference type="PRINTS" id="PR01435">
    <property type="entry name" value="NPOXDRDTASE5"/>
</dbReference>
<proteinExistence type="inferred from homology"/>
<feature type="chain" id="PRO_0000118132" description="NADH-ubiquinone oxidoreductase chain 5">
    <location>
        <begin position="1"/>
        <end position="664"/>
    </location>
</feature>
<feature type="transmembrane region" description="Helical" evidence="2">
    <location>
        <begin position="2"/>
        <end position="22"/>
    </location>
</feature>
<feature type="transmembrane region" description="Helical" evidence="2">
    <location>
        <begin position="28"/>
        <end position="48"/>
    </location>
</feature>
<feature type="transmembrane region" description="Helical" evidence="2">
    <location>
        <begin position="77"/>
        <end position="97"/>
    </location>
</feature>
<feature type="transmembrane region" description="Helical" evidence="2">
    <location>
        <begin position="120"/>
        <end position="140"/>
    </location>
</feature>
<feature type="transmembrane region" description="Helical" evidence="2">
    <location>
        <begin position="168"/>
        <end position="188"/>
    </location>
</feature>
<feature type="transmembrane region" description="Helical" evidence="2">
    <location>
        <begin position="210"/>
        <end position="230"/>
    </location>
</feature>
<feature type="transmembrane region" description="Helical" evidence="2">
    <location>
        <begin position="250"/>
        <end position="270"/>
    </location>
</feature>
<feature type="transmembrane region" description="Helical" evidence="2">
    <location>
        <begin position="285"/>
        <end position="305"/>
    </location>
</feature>
<feature type="transmembrane region" description="Helical" evidence="2">
    <location>
        <begin position="321"/>
        <end position="341"/>
    </location>
</feature>
<feature type="transmembrane region" description="Helical" evidence="2">
    <location>
        <begin position="342"/>
        <end position="362"/>
    </location>
</feature>
<feature type="transmembrane region" description="Helical" evidence="2">
    <location>
        <begin position="376"/>
        <end position="396"/>
    </location>
</feature>
<feature type="transmembrane region" description="Helical" evidence="2">
    <location>
        <begin position="424"/>
        <end position="444"/>
    </location>
</feature>
<feature type="transmembrane region" description="Helical" evidence="2">
    <location>
        <begin position="462"/>
        <end position="482"/>
    </location>
</feature>
<feature type="transmembrane region" description="Helical" evidence="2">
    <location>
        <begin position="521"/>
        <end position="541"/>
    </location>
</feature>
<feature type="transmembrane region" description="Helical" evidence="2">
    <location>
        <begin position="590"/>
        <end position="610"/>
    </location>
</feature>
<feature type="transmembrane region" description="Helical" evidence="2">
    <location>
        <begin position="614"/>
        <end position="634"/>
    </location>
</feature>
<feature type="transmembrane region" description="Helical" evidence="2">
    <location>
        <begin position="639"/>
        <end position="659"/>
    </location>
</feature>